<feature type="chain" id="PRO_0000088361" description="UPF0053 inner membrane protein YoaE">
    <location>
        <begin position="1"/>
        <end position="518"/>
    </location>
</feature>
<feature type="topological domain" description="Cytoplasmic" evidence="2">
    <location>
        <begin position="1"/>
        <end position="13"/>
    </location>
</feature>
<feature type="transmembrane region" description="Helical" evidence="2">
    <location>
        <begin position="14"/>
        <end position="34"/>
    </location>
</feature>
<feature type="topological domain" description="Periplasmic" evidence="2">
    <location>
        <begin position="35"/>
        <end position="48"/>
    </location>
</feature>
<feature type="transmembrane region" description="Helical" evidence="2">
    <location>
        <begin position="49"/>
        <end position="69"/>
    </location>
</feature>
<feature type="topological domain" description="Cytoplasmic" evidence="2">
    <location>
        <begin position="70"/>
        <end position="78"/>
    </location>
</feature>
<feature type="transmembrane region" description="Helical" evidence="2">
    <location>
        <begin position="79"/>
        <end position="99"/>
    </location>
</feature>
<feature type="topological domain" description="Periplasmic" evidence="2">
    <location>
        <begin position="100"/>
        <end position="124"/>
    </location>
</feature>
<feature type="transmembrane region" description="Helical" evidence="2">
    <location>
        <begin position="125"/>
        <end position="145"/>
    </location>
</feature>
<feature type="topological domain" description="Cytoplasmic" evidence="2">
    <location>
        <begin position="146"/>
        <end position="149"/>
    </location>
</feature>
<feature type="transmembrane region" description="Helical" evidence="2">
    <location>
        <begin position="150"/>
        <end position="170"/>
    </location>
</feature>
<feature type="topological domain" description="Periplasmic" evidence="2">
    <location>
        <begin position="171"/>
        <end position="184"/>
    </location>
</feature>
<feature type="transmembrane region" description="Helical" evidence="2">
    <location>
        <begin position="185"/>
        <end position="205"/>
    </location>
</feature>
<feature type="topological domain" description="Cytoplasmic" evidence="2">
    <location>
        <position position="206"/>
    </location>
</feature>
<feature type="transmembrane region" description="Helical" evidence="2">
    <location>
        <begin position="207"/>
        <end position="227"/>
    </location>
</feature>
<feature type="topological domain" description="Periplasmic" evidence="2">
    <location>
        <begin position="228"/>
        <end position="354"/>
    </location>
</feature>
<feature type="transmembrane region" description="Helical" evidence="2">
    <location>
        <begin position="355"/>
        <end position="375"/>
    </location>
</feature>
<feature type="topological domain" description="Cytoplasmic" evidence="2">
    <location>
        <begin position="376"/>
        <end position="518"/>
    </location>
</feature>
<feature type="domain" description="CBS 1" evidence="3">
    <location>
        <begin position="304"/>
        <end position="363"/>
    </location>
</feature>
<feature type="domain" description="CBS 2" evidence="3">
    <location>
        <begin position="367"/>
        <end position="427"/>
    </location>
</feature>
<keyword id="KW-0129">CBS domain</keyword>
<keyword id="KW-0997">Cell inner membrane</keyword>
<keyword id="KW-1003">Cell membrane</keyword>
<keyword id="KW-0472">Membrane</keyword>
<keyword id="KW-1185">Reference proteome</keyword>
<keyword id="KW-0677">Repeat</keyword>
<keyword id="KW-0812">Transmembrane</keyword>
<keyword id="KW-1133">Transmembrane helix</keyword>
<accession>P0AEC1</accession>
<accession>P76262</accession>
<dbReference type="EMBL" id="AE014075">
    <property type="protein sequence ID" value="AAN80681.1"/>
    <property type="molecule type" value="Genomic_DNA"/>
</dbReference>
<dbReference type="RefSeq" id="WP_000394983.1">
    <property type="nucleotide sequence ID" value="NZ_CP051263.1"/>
</dbReference>
<dbReference type="SMR" id="P0AEC1"/>
<dbReference type="STRING" id="199310.c2222"/>
<dbReference type="GeneID" id="93776065"/>
<dbReference type="KEGG" id="ecc:c2222"/>
<dbReference type="eggNOG" id="COG1253">
    <property type="taxonomic scope" value="Bacteria"/>
</dbReference>
<dbReference type="HOGENOM" id="CLU_015237_0_0_6"/>
<dbReference type="BioCyc" id="ECOL199310:C2222-MONOMER"/>
<dbReference type="Proteomes" id="UP000001410">
    <property type="component" value="Chromosome"/>
</dbReference>
<dbReference type="GO" id="GO:0005886">
    <property type="term" value="C:plasma membrane"/>
    <property type="evidence" value="ECO:0007669"/>
    <property type="project" value="UniProtKB-SubCell"/>
</dbReference>
<dbReference type="GO" id="GO:0050660">
    <property type="term" value="F:flavin adenine dinucleotide binding"/>
    <property type="evidence" value="ECO:0007669"/>
    <property type="project" value="InterPro"/>
</dbReference>
<dbReference type="CDD" id="cd04590">
    <property type="entry name" value="CBS_pair_CorC_HlyC_assoc"/>
    <property type="match status" value="1"/>
</dbReference>
<dbReference type="FunFam" id="3.10.580.10:FF:000008">
    <property type="entry name" value="Integral membrane protein TerC"/>
    <property type="match status" value="1"/>
</dbReference>
<dbReference type="FunFam" id="3.30.465.10:FF:000005">
    <property type="entry name" value="Integral membrane protein TerC"/>
    <property type="match status" value="1"/>
</dbReference>
<dbReference type="Gene3D" id="3.30.465.10">
    <property type="match status" value="1"/>
</dbReference>
<dbReference type="Gene3D" id="3.10.580.10">
    <property type="entry name" value="CBS-domain"/>
    <property type="match status" value="1"/>
</dbReference>
<dbReference type="InterPro" id="IPR000644">
    <property type="entry name" value="CBS_dom"/>
</dbReference>
<dbReference type="InterPro" id="IPR046342">
    <property type="entry name" value="CBS_dom_sf"/>
</dbReference>
<dbReference type="InterPro" id="IPR036318">
    <property type="entry name" value="FAD-bd_PCMH-like_sf"/>
</dbReference>
<dbReference type="InterPro" id="IPR016169">
    <property type="entry name" value="FAD-bd_PCMH_sub2"/>
</dbReference>
<dbReference type="InterPro" id="IPR005496">
    <property type="entry name" value="Integral_membrane_TerC"/>
</dbReference>
<dbReference type="InterPro" id="IPR044751">
    <property type="entry name" value="Ion_transp-like_CBS"/>
</dbReference>
<dbReference type="InterPro" id="IPR005170">
    <property type="entry name" value="Transptr-assoc_dom"/>
</dbReference>
<dbReference type="PANTHER" id="PTHR22777">
    <property type="entry name" value="HEMOLYSIN-RELATED"/>
    <property type="match status" value="1"/>
</dbReference>
<dbReference type="PANTHER" id="PTHR22777:SF15">
    <property type="entry name" value="UPF0053 INNER MEMBRANE PROTEIN YOAE"/>
    <property type="match status" value="1"/>
</dbReference>
<dbReference type="Pfam" id="PF03471">
    <property type="entry name" value="CorC_HlyC"/>
    <property type="match status" value="1"/>
</dbReference>
<dbReference type="Pfam" id="PF03741">
    <property type="entry name" value="TerC"/>
    <property type="match status" value="1"/>
</dbReference>
<dbReference type="SMART" id="SM01091">
    <property type="entry name" value="CorC_HlyC"/>
    <property type="match status" value="1"/>
</dbReference>
<dbReference type="SUPFAM" id="SSF54631">
    <property type="entry name" value="CBS-domain pair"/>
    <property type="match status" value="1"/>
</dbReference>
<dbReference type="SUPFAM" id="SSF56176">
    <property type="entry name" value="FAD-binding/transporter-associated domain-like"/>
    <property type="match status" value="1"/>
</dbReference>
<dbReference type="PROSITE" id="PS51371">
    <property type="entry name" value="CBS"/>
    <property type="match status" value="2"/>
</dbReference>
<name>YOAE_ECOL6</name>
<gene>
    <name type="primary">yoaE</name>
    <name type="ordered locus">c2222</name>
</gene>
<protein>
    <recommendedName>
        <fullName>UPF0053 inner membrane protein YoaE</fullName>
    </recommendedName>
</protein>
<proteinExistence type="inferred from homology"/>
<reference key="1">
    <citation type="journal article" date="2002" name="Proc. Natl. Acad. Sci. U.S.A.">
        <title>Extensive mosaic structure revealed by the complete genome sequence of uropathogenic Escherichia coli.</title>
        <authorList>
            <person name="Welch R.A."/>
            <person name="Burland V."/>
            <person name="Plunkett G. III"/>
            <person name="Redford P."/>
            <person name="Roesch P."/>
            <person name="Rasko D."/>
            <person name="Buckles E.L."/>
            <person name="Liou S.-R."/>
            <person name="Boutin A."/>
            <person name="Hackett J."/>
            <person name="Stroud D."/>
            <person name="Mayhew G.F."/>
            <person name="Rose D.J."/>
            <person name="Zhou S."/>
            <person name="Schwartz D.C."/>
            <person name="Perna N.T."/>
            <person name="Mobley H.L.T."/>
            <person name="Donnenberg M.S."/>
            <person name="Blattner F.R."/>
        </authorList>
    </citation>
    <scope>NUCLEOTIDE SEQUENCE [LARGE SCALE GENOMIC DNA]</scope>
    <source>
        <strain>CFT073 / ATCC 700928 / UPEC</strain>
    </source>
</reference>
<evidence type="ECO:0000250" key="1"/>
<evidence type="ECO:0000255" key="2"/>
<evidence type="ECO:0000255" key="3">
    <source>
        <dbReference type="PROSITE-ProRule" id="PRU00703"/>
    </source>
</evidence>
<evidence type="ECO:0000305" key="4"/>
<comment type="subcellular location">
    <subcellularLocation>
        <location evidence="1">Cell inner membrane</location>
        <topology evidence="1">Multi-pass membrane protein</topology>
    </subcellularLocation>
</comment>
<comment type="similarity">
    <text evidence="4">Belongs to the UPF0053 family.</text>
</comment>
<organism>
    <name type="scientific">Escherichia coli O6:H1 (strain CFT073 / ATCC 700928 / UPEC)</name>
    <dbReference type="NCBI Taxonomy" id="199310"/>
    <lineage>
        <taxon>Bacteria</taxon>
        <taxon>Pseudomonadati</taxon>
        <taxon>Pseudomonadota</taxon>
        <taxon>Gammaproteobacteria</taxon>
        <taxon>Enterobacterales</taxon>
        <taxon>Enterobacteriaceae</taxon>
        <taxon>Escherichia</taxon>
    </lineage>
</organism>
<sequence length="518" mass="56528">MEFLMDPSIWAGLLTLVVLEIVLGIDNLVFIAILADKLPPKQRDKARLLGLSLALIMRLGLLSLISWMVTLTKPLFTVMDFSFSGRDLIMLFGGIFLLFKATTELHERLENRDHDSGHGKGYASFWVVVTQIVILDAVFSLDAVITAVGMVNHLPVMMAAVVIAMAVMLLASKPLTRFVNQHPTVVVLCLSFLLMIGLSLVAEGFGFHIPKGYLYAAIGFSIIIEVFNQIARRNFIRHQSTLPLRARTADAILRLMGGKRQANVQHDADNPMPMPIPEGAFAEEERYMINGVLTLASRSLRGIMTPRGEISWVDANLGVDEIREQLLSSPHSLFPVCRGELDEIIGIVRAKELLVALEEGVDVAAIASASPAIIVPETLDPINLLGVLRRARGSFVIVTNEFGVVQGLVTPLDVLEAIAGEFPDADETPEIITDGDGWLVKGGTDLHALQQALDVEHLADDDDIATVAGLVISANGHIPRVGDVIDVGPLHITIIEANDYRVDLVRIVKEQPAHDEDE</sequence>